<evidence type="ECO:0000255" key="1">
    <source>
        <dbReference type="PROSITE-ProRule" id="PRU00247"/>
    </source>
</evidence>
<evidence type="ECO:0000256" key="2">
    <source>
        <dbReference type="SAM" id="MobiDB-lite"/>
    </source>
</evidence>
<evidence type="ECO:0000269" key="3">
    <source>
    </source>
</evidence>
<protein>
    <recommendedName>
        <fullName>SWIRM domain-containing protein YOR338W</fullName>
    </recommendedName>
</protein>
<sequence>MLDNMQFHSPAPEHPQLNGGINKIPASHKIGYKLNQQVQRLAVVRNNIEERLNSMESSHGQISDSSVVRAIDASIDDFLIPSPPLSPKLRQCPIISQPQLVNVESDHRELIMLTPVWEAGLNSQKYNHNTRNFLSQYSFFRDMKTTKRIPNKENRKLKVVKSVVNSEALPKRRRYDRKIKRRSRELYEDDGNRSENYDEESAQEVPVRSVTPIRQVKRSLHTISSPLASQGVVNNVPKYIPSMSWEKLPDYSPPLHTLPNSNNKVLKVEWKGSPMDLNHDPLKQRLHPAELVLAQILRLPCDLYLDSKRRFFLEKVHRFKKGLPFRRTDAQKACRIDVNKASRLFAAFEKVGWLQDKHFEKYL</sequence>
<comment type="induction">
    <text evidence="3">By heat stress.</text>
</comment>
<name>YO338_YEAST</name>
<organism>
    <name type="scientific">Saccharomyces cerevisiae (strain ATCC 204508 / S288c)</name>
    <name type="common">Baker's yeast</name>
    <dbReference type="NCBI Taxonomy" id="559292"/>
    <lineage>
        <taxon>Eukaryota</taxon>
        <taxon>Fungi</taxon>
        <taxon>Dikarya</taxon>
        <taxon>Ascomycota</taxon>
        <taxon>Saccharomycotina</taxon>
        <taxon>Saccharomycetes</taxon>
        <taxon>Saccharomycetales</taxon>
        <taxon>Saccharomycetaceae</taxon>
        <taxon>Saccharomyces</taxon>
    </lineage>
</organism>
<keyword id="KW-1185">Reference proteome</keyword>
<keyword id="KW-0346">Stress response</keyword>
<proteinExistence type="evidence at protein level"/>
<feature type="chain" id="PRO_0000245288" description="SWIRM domain-containing protein YOR338W">
    <location>
        <begin position="1"/>
        <end position="363"/>
    </location>
</feature>
<feature type="domain" description="SWIRM" evidence="1">
    <location>
        <begin position="266"/>
        <end position="363"/>
    </location>
</feature>
<feature type="region of interest" description="Disordered" evidence="2">
    <location>
        <begin position="1"/>
        <end position="22"/>
    </location>
</feature>
<feature type="region of interest" description="Disordered" evidence="2">
    <location>
        <begin position="186"/>
        <end position="208"/>
    </location>
</feature>
<feature type="compositionally biased region" description="Basic and acidic residues" evidence="2">
    <location>
        <begin position="186"/>
        <end position="196"/>
    </location>
</feature>
<gene>
    <name type="ordered locus">YOR338W</name>
    <name type="ORF">O6265</name>
</gene>
<accession>Q99326</accession>
<accession>D6W333</accession>
<accession>Q06855</accession>
<dbReference type="EMBL" id="X95720">
    <property type="protein sequence ID" value="CAA65026.1"/>
    <property type="molecule type" value="Genomic_DNA"/>
</dbReference>
<dbReference type="EMBL" id="Z75246">
    <property type="protein sequence ID" value="CAA99661.1"/>
    <property type="molecule type" value="Genomic_DNA"/>
</dbReference>
<dbReference type="EMBL" id="Z49821">
    <property type="protein sequence ID" value="CAA89983.1"/>
    <property type="molecule type" value="Genomic_DNA"/>
</dbReference>
<dbReference type="EMBL" id="BK006948">
    <property type="protein sequence ID" value="DAA11099.1"/>
    <property type="molecule type" value="Genomic_DNA"/>
</dbReference>
<dbReference type="PIR" id="S67247">
    <property type="entry name" value="S67247"/>
</dbReference>
<dbReference type="RefSeq" id="NP_014983.1">
    <property type="nucleotide sequence ID" value="NM_001183758.1"/>
</dbReference>
<dbReference type="BioGRID" id="34721">
    <property type="interactions" value="42"/>
</dbReference>
<dbReference type="DIP" id="DIP-2679N"/>
<dbReference type="FunCoup" id="Q99326">
    <property type="interactions" value="55"/>
</dbReference>
<dbReference type="IntAct" id="Q99326">
    <property type="interactions" value="1"/>
</dbReference>
<dbReference type="MINT" id="Q99326"/>
<dbReference type="STRING" id="4932.YOR338W"/>
<dbReference type="iPTMnet" id="Q99326"/>
<dbReference type="PaxDb" id="4932-YOR338W"/>
<dbReference type="PeptideAtlas" id="Q99326"/>
<dbReference type="EnsemblFungi" id="YOR338W_mRNA">
    <property type="protein sequence ID" value="YOR338W"/>
    <property type="gene ID" value="YOR338W"/>
</dbReference>
<dbReference type="GeneID" id="854516"/>
<dbReference type="KEGG" id="sce:YOR338W"/>
<dbReference type="AGR" id="SGD:S000005865"/>
<dbReference type="SGD" id="S000005865">
    <property type="gene designation" value="YOR338W"/>
</dbReference>
<dbReference type="VEuPathDB" id="FungiDB:YOR338W"/>
<dbReference type="eggNOG" id="ENOG502R6VN">
    <property type="taxonomic scope" value="Eukaryota"/>
</dbReference>
<dbReference type="GeneTree" id="ENSGT00940000176451"/>
<dbReference type="HOGENOM" id="CLU_042442_0_0_1"/>
<dbReference type="InParanoid" id="Q99326"/>
<dbReference type="OMA" id="IPSMSWE"/>
<dbReference type="OrthoDB" id="5598695at2759"/>
<dbReference type="BioCyc" id="YEAST:G3O-33813-MONOMER"/>
<dbReference type="Reactome" id="R-SCE-5689880">
    <property type="pathway name" value="Ub-specific processing proteases"/>
</dbReference>
<dbReference type="BioGRID-ORCS" id="854516">
    <property type="hits" value="0 hits in 10 CRISPR screens"/>
</dbReference>
<dbReference type="PRO" id="PR:Q99326"/>
<dbReference type="Proteomes" id="UP000002311">
    <property type="component" value="Chromosome XV"/>
</dbReference>
<dbReference type="RNAct" id="Q99326">
    <property type="molecule type" value="protein"/>
</dbReference>
<dbReference type="GO" id="GO:0005634">
    <property type="term" value="C:nucleus"/>
    <property type="evidence" value="ECO:0000318"/>
    <property type="project" value="GO_Central"/>
</dbReference>
<dbReference type="GO" id="GO:0070210">
    <property type="term" value="C:Rpd3L-Expanded complex"/>
    <property type="evidence" value="ECO:0000318"/>
    <property type="project" value="GO_Central"/>
</dbReference>
<dbReference type="GO" id="GO:0003682">
    <property type="term" value="F:chromatin binding"/>
    <property type="evidence" value="ECO:0000318"/>
    <property type="project" value="GO_Central"/>
</dbReference>
<dbReference type="GO" id="GO:0003713">
    <property type="term" value="F:transcription coactivator activity"/>
    <property type="evidence" value="ECO:0000318"/>
    <property type="project" value="GO_Central"/>
</dbReference>
<dbReference type="GO" id="GO:0030437">
    <property type="term" value="P:ascospore formation"/>
    <property type="evidence" value="ECO:0007001"/>
    <property type="project" value="SGD"/>
</dbReference>
<dbReference type="GO" id="GO:0006338">
    <property type="term" value="P:chromatin remodeling"/>
    <property type="evidence" value="ECO:0000318"/>
    <property type="project" value="GO_Central"/>
</dbReference>
<dbReference type="GO" id="GO:0006357">
    <property type="term" value="P:regulation of transcription by RNA polymerase II"/>
    <property type="evidence" value="ECO:0000318"/>
    <property type="project" value="GO_Central"/>
</dbReference>
<dbReference type="FunFam" id="1.10.10.10:FF:000087">
    <property type="entry name" value="Transcriptional adapter 2"/>
    <property type="match status" value="1"/>
</dbReference>
<dbReference type="Gene3D" id="1.10.10.10">
    <property type="entry name" value="Winged helix-like DNA-binding domain superfamily/Winged helix DNA-binding domain"/>
    <property type="match status" value="1"/>
</dbReference>
<dbReference type="InterPro" id="IPR009057">
    <property type="entry name" value="Homeodomain-like_sf"/>
</dbReference>
<dbReference type="InterPro" id="IPR007526">
    <property type="entry name" value="SWIRM"/>
</dbReference>
<dbReference type="InterPro" id="IPR036388">
    <property type="entry name" value="WH-like_DNA-bd_sf"/>
</dbReference>
<dbReference type="PANTHER" id="PTHR12374:SF21">
    <property type="entry name" value="SWIRM DOMAIN-CONTAINING PROTEIN FUN19-RELATED"/>
    <property type="match status" value="1"/>
</dbReference>
<dbReference type="PANTHER" id="PTHR12374">
    <property type="entry name" value="TRANSCRIPTIONAL ADAPTOR 2 ADA2 -RELATED"/>
    <property type="match status" value="1"/>
</dbReference>
<dbReference type="Pfam" id="PF04433">
    <property type="entry name" value="SWIRM"/>
    <property type="match status" value="1"/>
</dbReference>
<dbReference type="SUPFAM" id="SSF46689">
    <property type="entry name" value="Homeodomain-like"/>
    <property type="match status" value="1"/>
</dbReference>
<dbReference type="PROSITE" id="PS50934">
    <property type="entry name" value="SWIRM"/>
    <property type="match status" value="1"/>
</dbReference>
<reference key="1">
    <citation type="journal article" date="1996" name="Yeast">
        <title>Nucleotide sequence analysis of a 40 kb segment on the right arm of yeast chromosome XV reveals 18 open reading frames including a new pyruvate kinase and three homologues to chromosome I genes.</title>
        <authorList>
            <person name="Purnelle B."/>
            <person name="Goffeau A."/>
        </authorList>
    </citation>
    <scope>NUCLEOTIDE SEQUENCE [GENOMIC DNA]</scope>
    <source>
        <strain>ATCC 96604 / S288c / FY1679</strain>
    </source>
</reference>
<reference key="2">
    <citation type="journal article" date="1997" name="Nature">
        <title>The nucleotide sequence of Saccharomyces cerevisiae chromosome XV.</title>
        <authorList>
            <person name="Dujon B."/>
            <person name="Albermann K."/>
            <person name="Aldea M."/>
            <person name="Alexandraki D."/>
            <person name="Ansorge W."/>
            <person name="Arino J."/>
            <person name="Benes V."/>
            <person name="Bohn C."/>
            <person name="Bolotin-Fukuhara M."/>
            <person name="Bordonne R."/>
            <person name="Boyer J."/>
            <person name="Camasses A."/>
            <person name="Casamayor A."/>
            <person name="Casas C."/>
            <person name="Cheret G."/>
            <person name="Cziepluch C."/>
            <person name="Daignan-Fornier B."/>
            <person name="Dang V.-D."/>
            <person name="de Haan M."/>
            <person name="Delius H."/>
            <person name="Durand P."/>
            <person name="Fairhead C."/>
            <person name="Feldmann H."/>
            <person name="Gaillon L."/>
            <person name="Galisson F."/>
            <person name="Gamo F.-J."/>
            <person name="Gancedo C."/>
            <person name="Goffeau A."/>
            <person name="Goulding S.E."/>
            <person name="Grivell L.A."/>
            <person name="Habbig B."/>
            <person name="Hand N.J."/>
            <person name="Hani J."/>
            <person name="Hattenhorst U."/>
            <person name="Hebling U."/>
            <person name="Hernando Y."/>
            <person name="Herrero E."/>
            <person name="Heumann K."/>
            <person name="Hiesel R."/>
            <person name="Hilger F."/>
            <person name="Hofmann B."/>
            <person name="Hollenberg C.P."/>
            <person name="Hughes B."/>
            <person name="Jauniaux J.-C."/>
            <person name="Kalogeropoulos A."/>
            <person name="Katsoulou C."/>
            <person name="Kordes E."/>
            <person name="Lafuente M.J."/>
            <person name="Landt O."/>
            <person name="Louis E.J."/>
            <person name="Maarse A.C."/>
            <person name="Madania A."/>
            <person name="Mannhaupt G."/>
            <person name="Marck C."/>
            <person name="Martin R.P."/>
            <person name="Mewes H.-W."/>
            <person name="Michaux G."/>
            <person name="Paces V."/>
            <person name="Parle-McDermott A.G."/>
            <person name="Pearson B.M."/>
            <person name="Perrin A."/>
            <person name="Pettersson B."/>
            <person name="Poch O."/>
            <person name="Pohl T.M."/>
            <person name="Poirey R."/>
            <person name="Portetelle D."/>
            <person name="Pujol A."/>
            <person name="Purnelle B."/>
            <person name="Ramezani Rad M."/>
            <person name="Rechmann S."/>
            <person name="Schwager C."/>
            <person name="Schweizer M."/>
            <person name="Sor F."/>
            <person name="Sterky F."/>
            <person name="Tarassov I.A."/>
            <person name="Teodoru C."/>
            <person name="Tettelin H."/>
            <person name="Thierry A."/>
            <person name="Tobiasch E."/>
            <person name="Tzermia M."/>
            <person name="Uhlen M."/>
            <person name="Unseld M."/>
            <person name="Valens M."/>
            <person name="Vandenbol M."/>
            <person name="Vetter I."/>
            <person name="Vlcek C."/>
            <person name="Voet M."/>
            <person name="Volckaert G."/>
            <person name="Voss H."/>
            <person name="Wambutt R."/>
            <person name="Wedler H."/>
            <person name="Wiemann S."/>
            <person name="Winsor B."/>
            <person name="Wolfe K.H."/>
            <person name="Zollner A."/>
            <person name="Zumstein E."/>
            <person name="Kleine K."/>
        </authorList>
    </citation>
    <scope>NUCLEOTIDE SEQUENCE [LARGE SCALE GENOMIC DNA]</scope>
    <source>
        <strain>ATCC 204508 / S288c</strain>
    </source>
</reference>
<reference key="3">
    <citation type="journal article" date="2014" name="G3 (Bethesda)">
        <title>The reference genome sequence of Saccharomyces cerevisiae: Then and now.</title>
        <authorList>
            <person name="Engel S.R."/>
            <person name="Dietrich F.S."/>
            <person name="Fisk D.G."/>
            <person name="Binkley G."/>
            <person name="Balakrishnan R."/>
            <person name="Costanzo M.C."/>
            <person name="Dwight S.S."/>
            <person name="Hitz B.C."/>
            <person name="Karra K."/>
            <person name="Nash R.S."/>
            <person name="Weng S."/>
            <person name="Wong E.D."/>
            <person name="Lloyd P."/>
            <person name="Skrzypek M.S."/>
            <person name="Miyasato S.R."/>
            <person name="Simison M."/>
            <person name="Cherry J.M."/>
        </authorList>
    </citation>
    <scope>GENOME REANNOTATION</scope>
    <source>
        <strain>ATCC 204508 / S288c</strain>
    </source>
</reference>
<reference key="4">
    <citation type="journal article" date="1996" name="Yeast">
        <title>Sequence of 29 kb around the PDR10 locus on the right arm of Saccharomyces cerevisiae chromosome XV: similarity to part of chromosome I.</title>
        <authorList>
            <person name="Parle-McDermott A.G."/>
            <person name="Hand N.J."/>
            <person name="Goulding S.E."/>
            <person name="Wolfe K.H."/>
        </authorList>
    </citation>
    <scope>NUCLEOTIDE SEQUENCE [GENOMIC DNA] OF 1-98</scope>
</reference>
<reference key="5">
    <citation type="journal article" date="2003" name="J. Biochem.">
        <title>Response of genes associated with mitochondrial function to mild heat stress in yeast Saccharomyces cerevisiae.</title>
        <authorList>
            <person name="Sakaki K."/>
            <person name="Tashiro K."/>
            <person name="Kuhara S."/>
            <person name="Mihara K."/>
        </authorList>
    </citation>
    <scope>INDUCTION BY HEAT</scope>
</reference>
<reference key="6">
    <citation type="journal article" date="2008" name="Mol. Cell. Proteomics">
        <title>A multidimensional chromatography technology for in-depth phosphoproteome analysis.</title>
        <authorList>
            <person name="Albuquerque C.P."/>
            <person name="Smolka M.B."/>
            <person name="Payne S.H."/>
            <person name="Bafna V."/>
            <person name="Eng J."/>
            <person name="Zhou H."/>
        </authorList>
    </citation>
    <scope>IDENTIFICATION BY MASS SPECTROMETRY [LARGE SCALE ANALYSIS]</scope>
</reference>